<reference key="1">
    <citation type="journal article" date="2010" name="Biochimie">
        <title>Enzymatic and structural characterization of a basic phospholipase A(2) from the sea anemone Condylactis gigantea.</title>
        <authorList>
            <person name="Romero L."/>
            <person name="Marcussi S."/>
            <person name="Marchi-Salvador D.P."/>
            <person name="Silva F.P. Jr."/>
            <person name="Fuly A.L."/>
            <person name="Stabeli R.G."/>
            <person name="da Silva S.L."/>
            <person name="Gonzalez J."/>
            <person name="Monte A.D."/>
            <person name="Soares A.M."/>
        </authorList>
    </citation>
    <scope>NUCLEOTIDE SEQUENCE [MRNA]</scope>
    <scope>PROTEIN SEQUENCE OF 1-32</scope>
    <scope>FUNCTION</scope>
    <scope>CATALYTIC ACTIVITY</scope>
    <scope>COFACTOR</scope>
    <scope>SUBUNIT</scope>
    <scope>3D-STRUCTURE MODELING</scope>
</reference>
<reference key="2">
    <citation type="journal article" date="2012" name="Toxicon">
        <title>Development of a rational nomenclature for naming peptide and protein toxins from sea anemones.</title>
        <authorList>
            <person name="Oliveira J.S."/>
            <person name="Fuentes-Silva D."/>
            <person name="King G.F."/>
        </authorList>
    </citation>
    <scope>NOMENCLATURE</scope>
</reference>
<proteinExistence type="evidence at protein level"/>
<organism>
    <name type="scientific">Condylactis gigantea</name>
    <name type="common">Giant Caribbean anemone</name>
    <name type="synonym">Condylactis passiflora</name>
    <dbReference type="NCBI Taxonomy" id="47073"/>
    <lineage>
        <taxon>Eukaryota</taxon>
        <taxon>Metazoa</taxon>
        <taxon>Cnidaria</taxon>
        <taxon>Anthozoa</taxon>
        <taxon>Hexacorallia</taxon>
        <taxon>Actiniaria</taxon>
        <taxon>Actiniidae</taxon>
        <taxon>Condylactis</taxon>
    </lineage>
</organism>
<accession>D2X8K2</accession>
<protein>
    <recommendedName>
        <fullName evidence="6">Phospholipase A2 A2-actitoxin-Cgg2a</fullName>
        <shortName evidence="6">A2-AITX-Cgg2a</shortName>
        <ecNumber evidence="4">3.1.1.4</ecNumber>
    </recommendedName>
    <alternativeName>
        <fullName evidence="5">CgPLA2</fullName>
    </alternativeName>
    <alternativeName>
        <fullName>Phosphatidylcholine 2-acylhydrolase</fullName>
    </alternativeName>
</protein>
<name>PA2_CONGI</name>
<dbReference type="EC" id="3.1.1.4" evidence="4"/>
<dbReference type="EMBL" id="GU046515">
    <property type="protein sequence ID" value="ADB13102.1"/>
    <property type="molecule type" value="mRNA"/>
</dbReference>
<dbReference type="SMR" id="D2X8K2"/>
<dbReference type="GO" id="GO:0005576">
    <property type="term" value="C:extracellular region"/>
    <property type="evidence" value="ECO:0007669"/>
    <property type="project" value="UniProtKB-SubCell"/>
</dbReference>
<dbReference type="GO" id="GO:0042151">
    <property type="term" value="C:nematocyst"/>
    <property type="evidence" value="ECO:0007669"/>
    <property type="project" value="UniProtKB-SubCell"/>
</dbReference>
<dbReference type="GO" id="GO:0005509">
    <property type="term" value="F:calcium ion binding"/>
    <property type="evidence" value="ECO:0000314"/>
    <property type="project" value="UniProtKB"/>
</dbReference>
<dbReference type="GO" id="GO:0047498">
    <property type="term" value="F:calcium-dependent phospholipase A2 activity"/>
    <property type="evidence" value="ECO:0000314"/>
    <property type="project" value="UniProtKB"/>
</dbReference>
<dbReference type="GO" id="GO:0005543">
    <property type="term" value="F:phospholipid binding"/>
    <property type="evidence" value="ECO:0007669"/>
    <property type="project" value="TreeGrafter"/>
</dbReference>
<dbReference type="GO" id="GO:0090729">
    <property type="term" value="F:toxin activity"/>
    <property type="evidence" value="ECO:0007669"/>
    <property type="project" value="UniProtKB-KW"/>
</dbReference>
<dbReference type="GO" id="GO:0050482">
    <property type="term" value="P:arachidonate secretion"/>
    <property type="evidence" value="ECO:0007669"/>
    <property type="project" value="InterPro"/>
</dbReference>
<dbReference type="GO" id="GO:0016042">
    <property type="term" value="P:lipid catabolic process"/>
    <property type="evidence" value="ECO:0007669"/>
    <property type="project" value="InterPro"/>
</dbReference>
<dbReference type="GO" id="GO:0006644">
    <property type="term" value="P:phospholipid metabolic process"/>
    <property type="evidence" value="ECO:0007669"/>
    <property type="project" value="InterPro"/>
</dbReference>
<dbReference type="GO" id="GO:0044398">
    <property type="term" value="P:venom-mediated edema in another organism"/>
    <property type="evidence" value="ECO:0000314"/>
    <property type="project" value="UniProtKB"/>
</dbReference>
<dbReference type="GO" id="GO:0044522">
    <property type="term" value="P:venom-mediated myocyte killing in another organism"/>
    <property type="evidence" value="ECO:0000314"/>
    <property type="project" value="UniProtKB"/>
</dbReference>
<dbReference type="GO" id="GO:0044470">
    <property type="term" value="P:venom-mediated suppression of blood coagulation"/>
    <property type="evidence" value="ECO:0000314"/>
    <property type="project" value="UniProtKB"/>
</dbReference>
<dbReference type="CDD" id="cd00125">
    <property type="entry name" value="PLA2c"/>
    <property type="match status" value="1"/>
</dbReference>
<dbReference type="FunFam" id="1.20.90.10:FF:000016">
    <property type="entry name" value="Phospholipase A(2)"/>
    <property type="match status" value="1"/>
</dbReference>
<dbReference type="Gene3D" id="1.20.90.10">
    <property type="entry name" value="Phospholipase A2 domain"/>
    <property type="match status" value="1"/>
</dbReference>
<dbReference type="InterPro" id="IPR001211">
    <property type="entry name" value="PLipase_A2"/>
</dbReference>
<dbReference type="InterPro" id="IPR033112">
    <property type="entry name" value="PLipase_A2_Asp_AS"/>
</dbReference>
<dbReference type="InterPro" id="IPR016090">
    <property type="entry name" value="PLipase_A2_dom"/>
</dbReference>
<dbReference type="InterPro" id="IPR036444">
    <property type="entry name" value="PLipase_A2_dom_sf"/>
</dbReference>
<dbReference type="InterPro" id="IPR033113">
    <property type="entry name" value="PLipase_A2_His_AS"/>
</dbReference>
<dbReference type="PANTHER" id="PTHR11716:SF51">
    <property type="entry name" value="PHOSPHOLIPASE A2"/>
    <property type="match status" value="1"/>
</dbReference>
<dbReference type="PANTHER" id="PTHR11716">
    <property type="entry name" value="PHOSPHOLIPASE A2 FAMILY MEMBER"/>
    <property type="match status" value="1"/>
</dbReference>
<dbReference type="Pfam" id="PF00068">
    <property type="entry name" value="Phospholip_A2_1"/>
    <property type="match status" value="1"/>
</dbReference>
<dbReference type="PRINTS" id="PR00389">
    <property type="entry name" value="PHPHLIPASEA2"/>
</dbReference>
<dbReference type="SMART" id="SM00085">
    <property type="entry name" value="PA2c"/>
    <property type="match status" value="1"/>
</dbReference>
<dbReference type="SUPFAM" id="SSF48619">
    <property type="entry name" value="Phospholipase A2, PLA2"/>
    <property type="match status" value="1"/>
</dbReference>
<dbReference type="PROSITE" id="PS00119">
    <property type="entry name" value="PA2_ASP"/>
    <property type="match status" value="1"/>
</dbReference>
<dbReference type="PROSITE" id="PS00118">
    <property type="entry name" value="PA2_HIS"/>
    <property type="match status" value="1"/>
</dbReference>
<comment type="function">
    <text evidence="4">Sea anemone phospholipase A2 (PLA2). When incubated with plasma, this protein shows a moderate anticoagulant activity (0.15 ug of enzyme/200 uL of plasma), inhibiting clotting induced by thrombin. This enzyme also induces myotoxicity, and edema. PLA2 catalyzes the calcium-dependent hydrolysis of the 2-acyl groups in 3-sn-phosphoglycerides.</text>
</comment>
<comment type="catalytic activity">
    <reaction evidence="2 3 4">
        <text>a 1,2-diacyl-sn-glycero-3-phosphocholine + H2O = a 1-acyl-sn-glycero-3-phosphocholine + a fatty acid + H(+)</text>
        <dbReference type="Rhea" id="RHEA:15801"/>
        <dbReference type="ChEBI" id="CHEBI:15377"/>
        <dbReference type="ChEBI" id="CHEBI:15378"/>
        <dbReference type="ChEBI" id="CHEBI:28868"/>
        <dbReference type="ChEBI" id="CHEBI:57643"/>
        <dbReference type="ChEBI" id="CHEBI:58168"/>
        <dbReference type="EC" id="3.1.1.4"/>
    </reaction>
</comment>
<comment type="cofactor">
    <cofactor evidence="4">
        <name>Ca(2+)</name>
        <dbReference type="ChEBI" id="CHEBI:29108"/>
    </cofactor>
    <text evidence="4">Binds 1 Ca(2+) ion per subunit.</text>
</comment>
<comment type="subunit">
    <text evidence="4">Homodimer.</text>
</comment>
<comment type="subcellular location">
    <subcellularLocation>
        <location evidence="7">Secreted</location>
    </subcellularLocation>
    <subcellularLocation>
        <location evidence="7">Nematocyst</location>
    </subcellularLocation>
</comment>
<comment type="miscellaneous">
    <text evidence="4">Lacks hemolytic activity.</text>
</comment>
<comment type="similarity">
    <text evidence="7">Belongs to the phospholipase A2 family.</text>
</comment>
<sequence>GVWQFAYMIAKYTGRNPLDYWGYGCWCGLGGKGNPVDAVDRCCYVHDVCYNSITQGPRPTCSRIAPYHKNYYFTGKKCSTGWLTSKCGRAICACDIAAVKCFRRNHFNKKYRLYKKNIC</sequence>
<feature type="chain" id="PRO_0000413797" description="Phospholipase A2 A2-actitoxin-Cgg2a">
    <location>
        <begin position="1"/>
        <end position="119"/>
    </location>
</feature>
<feature type="active site" evidence="1">
    <location>
        <position position="46"/>
    </location>
</feature>
<feature type="active site" evidence="1">
    <location>
        <position position="95"/>
    </location>
</feature>
<feature type="binding site" evidence="1">
    <location>
        <position position="28"/>
    </location>
    <ligand>
        <name>Ca(2+)</name>
        <dbReference type="ChEBI" id="CHEBI:29108"/>
    </ligand>
</feature>
<feature type="binding site" evidence="1">
    <location>
        <position position="30"/>
    </location>
    <ligand>
        <name>Ca(2+)</name>
        <dbReference type="ChEBI" id="CHEBI:29108"/>
    </ligand>
</feature>
<feature type="binding site" evidence="1">
    <location>
        <position position="47"/>
    </location>
    <ligand>
        <name>Ca(2+)</name>
        <dbReference type="ChEBI" id="CHEBI:29108"/>
    </ligand>
</feature>
<feature type="disulfide bond" evidence="1">
    <location>
        <begin position="25"/>
        <end position="119"/>
    </location>
</feature>
<feature type="disulfide bond" evidence="1">
    <location>
        <begin position="27"/>
        <end position="43"/>
    </location>
</feature>
<feature type="disulfide bond" evidence="1">
    <location>
        <begin position="42"/>
        <end position="101"/>
    </location>
</feature>
<feature type="disulfide bond" evidence="1">
    <location>
        <begin position="49"/>
        <end position="94"/>
    </location>
</feature>
<feature type="disulfide bond" evidence="1">
    <location>
        <begin position="61"/>
        <end position="87"/>
    </location>
</feature>
<feature type="disulfide bond" evidence="1">
    <location>
        <begin position="78"/>
        <end position="92"/>
    </location>
</feature>
<evidence type="ECO:0000250" key="1"/>
<evidence type="ECO:0000255" key="2">
    <source>
        <dbReference type="PROSITE-ProRule" id="PRU10035"/>
    </source>
</evidence>
<evidence type="ECO:0000255" key="3">
    <source>
        <dbReference type="PROSITE-ProRule" id="PRU10036"/>
    </source>
</evidence>
<evidence type="ECO:0000269" key="4">
    <source>
    </source>
</evidence>
<evidence type="ECO:0000303" key="5">
    <source>
    </source>
</evidence>
<evidence type="ECO:0000303" key="6">
    <source>
    </source>
</evidence>
<evidence type="ECO:0000305" key="7"/>
<keyword id="KW-1203">Blood coagulation cascade inhibiting toxin</keyword>
<keyword id="KW-0903">Direct protein sequencing</keyword>
<keyword id="KW-1015">Disulfide bond</keyword>
<keyword id="KW-1199">Hemostasis impairing toxin</keyword>
<keyword id="KW-0378">Hydrolase</keyword>
<keyword id="KW-0395">Inflammatory response</keyword>
<keyword id="KW-0479">Metal-binding</keyword>
<keyword id="KW-0959">Myotoxin</keyword>
<keyword id="KW-0166">Nematocyst</keyword>
<keyword id="KW-0964">Secreted</keyword>
<keyword id="KW-0800">Toxin</keyword>